<protein>
    <recommendedName>
        <fullName>DNA-directed RNA polymerase II subunit RPB2</fullName>
        <ecNumber evidence="2">2.7.7.6</ecNumber>
    </recommendedName>
    <alternativeName>
        <fullName>3'-5' exoribonuclease</fullName>
        <ecNumber evidence="2">3.1.13.-</ecNumber>
    </alternativeName>
    <alternativeName>
        <fullName>DNA-directed RNA polymerase II 140 kDa polypeptide</fullName>
    </alternativeName>
    <alternativeName>
        <fullName>DNA-directed RNA polymerase II subunit B</fullName>
    </alternativeName>
    <alternativeName>
        <fullName>RNA polymerase II subunit 2</fullName>
    </alternativeName>
    <alternativeName>
        <fullName>RNA polymerase II subunit B2</fullName>
    </alternativeName>
    <alternativeName>
        <fullName>RNA-directed RNA polymerase II subunit RPB2</fullName>
        <ecNumber evidence="2">2.7.7.48</ecNumber>
    </alternativeName>
</protein>
<feature type="chain" id="PRO_0000048086" description="DNA-directed RNA polymerase II subunit RPB2">
    <location>
        <begin position="1"/>
        <end position="1174"/>
    </location>
</feature>
<feature type="zinc finger region" description="C4-type" evidence="2">
    <location>
        <begin position="1119"/>
        <end position="1140"/>
    </location>
</feature>
<feature type="binding site" evidence="2">
    <location>
        <position position="409"/>
    </location>
    <ligand>
        <name>DNA</name>
        <dbReference type="ChEBI" id="CHEBI:16991"/>
        <label>promoter</label>
    </ligand>
</feature>
<feature type="binding site" evidence="1">
    <location>
        <position position="456"/>
    </location>
    <ligand>
        <name>DNA</name>
        <dbReference type="ChEBI" id="CHEBI:16991"/>
        <label>template strand</label>
    </ligand>
</feature>
<feature type="binding site" evidence="1">
    <location>
        <position position="731"/>
    </location>
    <ligand>
        <name>RNA</name>
        <dbReference type="ChEBI" id="CHEBI:33697"/>
    </ligand>
</feature>
<feature type="binding site" evidence="2">
    <location>
        <position position="792"/>
    </location>
    <ligand>
        <name>Mg(2+)</name>
        <dbReference type="ChEBI" id="CHEBI:18420"/>
        <note>ligand shared with POLR2A/RPB1</note>
    </ligand>
</feature>
<feature type="binding site" evidence="1">
    <location>
        <position position="841"/>
    </location>
    <ligand>
        <name>RNA</name>
        <dbReference type="ChEBI" id="CHEBI:33697"/>
    </ligand>
</feature>
<feature type="binding site" evidence="1">
    <location>
        <position position="890"/>
    </location>
    <ligand>
        <name>RNA</name>
        <dbReference type="ChEBI" id="CHEBI:33697"/>
    </ligand>
</feature>
<feature type="binding site" evidence="1">
    <location>
        <position position="942"/>
    </location>
    <ligand>
        <name>RNA</name>
        <dbReference type="ChEBI" id="CHEBI:33697"/>
    </ligand>
</feature>
<feature type="binding site" evidence="1">
    <location>
        <position position="1078"/>
    </location>
    <ligand>
        <name>DNA</name>
        <dbReference type="ChEBI" id="CHEBI:16991"/>
        <label>template strand</label>
    </ligand>
</feature>
<feature type="binding site" evidence="1">
    <location>
        <position position="1085"/>
    </location>
    <ligand>
        <name>DNA</name>
        <dbReference type="ChEBI" id="CHEBI:16991"/>
        <label>template strand</label>
    </ligand>
</feature>
<feature type="binding site" evidence="2">
    <location>
        <position position="1119"/>
    </location>
    <ligand>
        <name>Zn(2+)</name>
        <dbReference type="ChEBI" id="CHEBI:29105"/>
    </ligand>
</feature>
<feature type="binding site" evidence="2">
    <location>
        <position position="1122"/>
    </location>
    <ligand>
        <name>Zn(2+)</name>
        <dbReference type="ChEBI" id="CHEBI:29105"/>
    </ligand>
</feature>
<feature type="binding site" evidence="2">
    <location>
        <position position="1137"/>
    </location>
    <ligand>
        <name>Zn(2+)</name>
        <dbReference type="ChEBI" id="CHEBI:29105"/>
    </ligand>
</feature>
<feature type="binding site" evidence="2">
    <location>
        <position position="1140"/>
    </location>
    <ligand>
        <name>Zn(2+)</name>
        <dbReference type="ChEBI" id="CHEBI:29105"/>
    </ligand>
</feature>
<feature type="modified residue" description="Phosphoserine" evidence="2">
    <location>
        <position position="937"/>
    </location>
</feature>
<feature type="modified residue" description="N6-methyllysine" evidence="2">
    <location>
        <position position="1052"/>
    </location>
</feature>
<sequence>MYDADEDMQYDEDDDEITPDLWQEACWIVISSYFDEKGLVRQQLDSFDEFIQMSVQRIVEDAPPIDLQAEAQHASGEVEEPPRYLLKFEQIYLSKPTHWERDGAPSPMMPNEARLRNLTYSAPLYVDITKTVIKEGEEQLQTQHQKTFIGKIPIMLRSTYCLLNGLTDRDLCELNECPLDPGGYFIINGSEKVLIAQEKMATNTVYVFAKKDSKYAYTGECRSCLENSSRPTSTIWVSMLARGGQGAKKSAIGQRIVATLPYIKQEVPIIIVFRALGFVSDRDILEHIIYDFEDPEMMEMVKPSLDEAFVIQEQNVALNFIGSRGAKPGVTKEKRIKYAKEVLQKEMLPHVGVSDFCETKKAYFLGYMVHRLLLAALGRRELDDRDHYGNKRLDLAGPLLAFLFRGMFKNLLKEVRIYAQKFIDRGKDFNLELAIKTRIISDGLKYSLATGNWGDQKKAHQARAGVSQVLNRLTFASTLSHLRRLNSPIGRDGKLAKPRQLHNTLWGMVCPAETPEGHAVGLVKNLALMAYISVGSQPSPILEFLEEWSMENLEEISPAAIADATKIFVNGCWVGIHKDPEQLMNTLRKLRRQMDIIVSEVSMIRDIREREIRIYTDAGRICRPLLIVEKQKLLLKKRHIDQLKEREYNNYSWQDLVASGVVEYIDTLEEETVMLAMTPDDLQEKEVAYCSTYTHCEIHPSMILGVCASIIPFPDHNQSPRNTYQSAMGKQAMGVYITNFHVRMDTLAHVLYYPQKPLVTTRSMEYLRFRELPAGINSIVAIASYTGYNQEDSVIMNRSAVDRGFFRSVFYRSYKEQESKKGFDQEEVFEKPTRETCQGMRHAIYEKLDDDGLIAPGVRVSGDDVIIGKTVTLPENEDELESTNRRYTKRDCSTFLRTSETGIVDQVMVTLNQEGYKFCKIRVRSVRIPQIGDKFASRHGQKGTCGIQYRQEDMPFTCEGITPDIIINPHAIPSRMTIGHLIECLQGKVSANKGEIGDATPFNDAVNVQKISNLLSDYGYHLRGNEVLYNGFTGRKITSQIFIGPTYYQRLKHMVDDKIHSRARGPIQILNRQPMEGRSRDGGLRFGEMERDCQIAHGAAQFLRERLFEASDPYQVHVCNLCGIMAIANTRTHTYECRGCRNKTQISLVRMPYACKLLFQELMSMSIAPRMMSV</sequence>
<name>RPB2_MOUSE</name>
<reference key="1">
    <citation type="journal article" date="2004" name="Genome Res.">
        <title>The status, quality, and expansion of the NIH full-length cDNA project: the Mammalian Gene Collection (MGC).</title>
        <authorList>
            <consortium name="The MGC Project Team"/>
        </authorList>
    </citation>
    <scope>NUCLEOTIDE SEQUENCE [LARGE SCALE MRNA]</scope>
    <source>
        <strain>FVB/N</strain>
        <tissue>Mammary tumor</tissue>
    </source>
</reference>
<reference key="2">
    <citation type="journal article" date="2010" name="Cell">
        <title>A tissue-specific atlas of mouse protein phosphorylation and expression.</title>
        <authorList>
            <person name="Huttlin E.L."/>
            <person name="Jedrychowski M.P."/>
            <person name="Elias J.E."/>
            <person name="Goswami T."/>
            <person name="Rad R."/>
            <person name="Beausoleil S.A."/>
            <person name="Villen J."/>
            <person name="Haas W."/>
            <person name="Sowa M.E."/>
            <person name="Gygi S.P."/>
        </authorList>
    </citation>
    <scope>IDENTIFICATION BY MASS SPECTROMETRY [LARGE SCALE ANALYSIS]</scope>
    <source>
        <tissue>Brain</tissue>
        <tissue>Brown adipose tissue</tissue>
        <tissue>Heart</tissue>
        <tissue>Kidney</tissue>
        <tissue>Liver</tissue>
        <tissue>Lung</tissue>
        <tissue>Pancreas</tissue>
        <tissue>Spleen</tissue>
        <tissue>Testis</tissue>
    </source>
</reference>
<dbReference type="EC" id="2.7.7.6" evidence="2"/>
<dbReference type="EC" id="3.1.13.-" evidence="2"/>
<dbReference type="EC" id="2.7.7.48" evidence="2"/>
<dbReference type="EMBL" id="BC038472">
    <property type="protein sequence ID" value="AAH38472.1"/>
    <property type="status" value="ALT_INIT"/>
    <property type="molecule type" value="mRNA"/>
</dbReference>
<dbReference type="CCDS" id="CCDS51528.1"/>
<dbReference type="RefSeq" id="NP_722493.2">
    <property type="nucleotide sequence ID" value="NM_153798.2"/>
</dbReference>
<dbReference type="SMR" id="Q8CFI7"/>
<dbReference type="BioGRID" id="231111">
    <property type="interactions" value="26"/>
</dbReference>
<dbReference type="DIP" id="DIP-57023N"/>
<dbReference type="FunCoup" id="Q8CFI7">
    <property type="interactions" value="3394"/>
</dbReference>
<dbReference type="IntAct" id="Q8CFI7">
    <property type="interactions" value="14"/>
</dbReference>
<dbReference type="MINT" id="Q8CFI7"/>
<dbReference type="STRING" id="10090.ENSMUSP00000031167"/>
<dbReference type="GlyGen" id="Q8CFI7">
    <property type="glycosylation" value="1 site, 1 O-linked glycan (1 site)"/>
</dbReference>
<dbReference type="iPTMnet" id="Q8CFI7"/>
<dbReference type="PhosphoSitePlus" id="Q8CFI7"/>
<dbReference type="SwissPalm" id="Q8CFI7"/>
<dbReference type="PaxDb" id="10090-ENSMUSP00000031167"/>
<dbReference type="PeptideAtlas" id="Q8CFI7"/>
<dbReference type="ProteomicsDB" id="300435"/>
<dbReference type="Pumba" id="Q8CFI7"/>
<dbReference type="Antibodypedia" id="12545">
    <property type="antibodies" value="186 antibodies from 28 providers"/>
</dbReference>
<dbReference type="DNASU" id="231329"/>
<dbReference type="Ensembl" id="ENSMUST00000031167.6">
    <property type="protein sequence ID" value="ENSMUSP00000031167.6"/>
    <property type="gene ID" value="ENSMUSG00000029250.6"/>
</dbReference>
<dbReference type="GeneID" id="231329"/>
<dbReference type="KEGG" id="mmu:231329"/>
<dbReference type="UCSC" id="uc008xwe.2">
    <property type="organism name" value="mouse"/>
</dbReference>
<dbReference type="AGR" id="MGI:2388280"/>
<dbReference type="CTD" id="5431"/>
<dbReference type="MGI" id="MGI:2388280">
    <property type="gene designation" value="Polr2b"/>
</dbReference>
<dbReference type="VEuPathDB" id="HostDB:ENSMUSG00000029250"/>
<dbReference type="eggNOG" id="KOG0214">
    <property type="taxonomic scope" value="Eukaryota"/>
</dbReference>
<dbReference type="GeneTree" id="ENSGT00950000183132"/>
<dbReference type="HOGENOM" id="CLU_000524_5_2_1"/>
<dbReference type="InParanoid" id="Q8CFI7"/>
<dbReference type="OMA" id="CYDRNDS"/>
<dbReference type="OrthoDB" id="10248617at2759"/>
<dbReference type="PhylomeDB" id="Q8CFI7"/>
<dbReference type="TreeFam" id="TF103037"/>
<dbReference type="Reactome" id="R-MMU-112382">
    <property type="pathway name" value="Formation of RNA Pol II elongation complex"/>
</dbReference>
<dbReference type="Reactome" id="R-MMU-113418">
    <property type="pathway name" value="Formation of the Early Elongation Complex"/>
</dbReference>
<dbReference type="Reactome" id="R-MMU-674695">
    <property type="pathway name" value="RNA Polymerase II Pre-transcription Events"/>
</dbReference>
<dbReference type="Reactome" id="R-MMU-6781823">
    <property type="pathway name" value="Formation of TC-NER Pre-Incision Complex"/>
</dbReference>
<dbReference type="Reactome" id="R-MMU-6782135">
    <property type="pathway name" value="Dual incision in TC-NER"/>
</dbReference>
<dbReference type="Reactome" id="R-MMU-6782210">
    <property type="pathway name" value="Gap-filling DNA repair synthesis and ligation in TC-NER"/>
</dbReference>
<dbReference type="Reactome" id="R-MMU-6796648">
    <property type="pathway name" value="TP53 Regulates Transcription of DNA Repair Genes"/>
</dbReference>
<dbReference type="Reactome" id="R-MMU-6803529">
    <property type="pathway name" value="FGFR2 alternative splicing"/>
</dbReference>
<dbReference type="Reactome" id="R-MMU-6807505">
    <property type="pathway name" value="RNA polymerase II transcribes snRNA genes"/>
</dbReference>
<dbReference type="Reactome" id="R-MMU-72086">
    <property type="pathway name" value="mRNA Capping"/>
</dbReference>
<dbReference type="Reactome" id="R-MMU-72163">
    <property type="pathway name" value="mRNA Splicing - Major Pathway"/>
</dbReference>
<dbReference type="Reactome" id="R-MMU-72165">
    <property type="pathway name" value="mRNA Splicing - Minor Pathway"/>
</dbReference>
<dbReference type="Reactome" id="R-MMU-72203">
    <property type="pathway name" value="Processing of Capped Intron-Containing Pre-mRNA"/>
</dbReference>
<dbReference type="Reactome" id="R-MMU-73776">
    <property type="pathway name" value="RNA Polymerase II Promoter Escape"/>
</dbReference>
<dbReference type="Reactome" id="R-MMU-73779">
    <property type="pathway name" value="RNA Polymerase II Transcription Pre-Initiation And Promoter Opening"/>
</dbReference>
<dbReference type="Reactome" id="R-MMU-75953">
    <property type="pathway name" value="RNA Polymerase II Transcription Initiation"/>
</dbReference>
<dbReference type="Reactome" id="R-MMU-75955">
    <property type="pathway name" value="RNA Polymerase II Transcription Elongation"/>
</dbReference>
<dbReference type="Reactome" id="R-MMU-76042">
    <property type="pathway name" value="RNA Polymerase II Transcription Initiation And Promoter Clearance"/>
</dbReference>
<dbReference type="Reactome" id="R-MMU-77075">
    <property type="pathway name" value="RNA Pol II CTD phosphorylation and interaction with CE"/>
</dbReference>
<dbReference type="Reactome" id="R-MMU-9018519">
    <property type="pathway name" value="Estrogen-dependent gene expression"/>
</dbReference>
<dbReference type="BioGRID-ORCS" id="231329">
    <property type="hits" value="25 hits in 78 CRISPR screens"/>
</dbReference>
<dbReference type="ChiTaRS" id="Polr2b">
    <property type="organism name" value="mouse"/>
</dbReference>
<dbReference type="PRO" id="PR:Q8CFI7"/>
<dbReference type="Proteomes" id="UP000000589">
    <property type="component" value="Chromosome 5"/>
</dbReference>
<dbReference type="RNAct" id="Q8CFI7">
    <property type="molecule type" value="protein"/>
</dbReference>
<dbReference type="Bgee" id="ENSMUSG00000029250">
    <property type="expression patterns" value="Expressed in saccule of membranous labyrinth and 266 other cell types or tissues"/>
</dbReference>
<dbReference type="GO" id="GO:0000781">
    <property type="term" value="C:chromosome, telomeric region"/>
    <property type="evidence" value="ECO:0007669"/>
    <property type="project" value="Ensembl"/>
</dbReference>
<dbReference type="GO" id="GO:0005739">
    <property type="term" value="C:mitochondrion"/>
    <property type="evidence" value="ECO:0007669"/>
    <property type="project" value="GOC"/>
</dbReference>
<dbReference type="GO" id="GO:0005654">
    <property type="term" value="C:nucleoplasm"/>
    <property type="evidence" value="ECO:0000304"/>
    <property type="project" value="Reactome"/>
</dbReference>
<dbReference type="GO" id="GO:0005634">
    <property type="term" value="C:nucleus"/>
    <property type="evidence" value="ECO:0000250"/>
    <property type="project" value="UniProtKB"/>
</dbReference>
<dbReference type="GO" id="GO:0005665">
    <property type="term" value="C:RNA polymerase II, core complex"/>
    <property type="evidence" value="ECO:0000250"/>
    <property type="project" value="UniProtKB"/>
</dbReference>
<dbReference type="GO" id="GO:0003682">
    <property type="term" value="F:chromatin binding"/>
    <property type="evidence" value="ECO:0000314"/>
    <property type="project" value="MGI"/>
</dbReference>
<dbReference type="GO" id="GO:0003677">
    <property type="term" value="F:DNA binding"/>
    <property type="evidence" value="ECO:0007669"/>
    <property type="project" value="InterPro"/>
</dbReference>
<dbReference type="GO" id="GO:0003899">
    <property type="term" value="F:DNA-directed RNA polymerase activity"/>
    <property type="evidence" value="ECO:0007669"/>
    <property type="project" value="UniProtKB-EC"/>
</dbReference>
<dbReference type="GO" id="GO:0016787">
    <property type="term" value="F:hydrolase activity"/>
    <property type="evidence" value="ECO:0007669"/>
    <property type="project" value="UniProtKB-KW"/>
</dbReference>
<dbReference type="GO" id="GO:0032549">
    <property type="term" value="F:ribonucleoside binding"/>
    <property type="evidence" value="ECO:0007669"/>
    <property type="project" value="InterPro"/>
</dbReference>
<dbReference type="GO" id="GO:0003968">
    <property type="term" value="F:RNA-directed RNA polymerase activity"/>
    <property type="evidence" value="ECO:0007669"/>
    <property type="project" value="Ensembl"/>
</dbReference>
<dbReference type="GO" id="GO:0008270">
    <property type="term" value="F:zinc ion binding"/>
    <property type="evidence" value="ECO:0007669"/>
    <property type="project" value="UniProtKB-KW"/>
</dbReference>
<dbReference type="GO" id="GO:0006366">
    <property type="term" value="P:transcription by RNA polymerase II"/>
    <property type="evidence" value="ECO:0000250"/>
    <property type="project" value="UniProtKB"/>
</dbReference>
<dbReference type="CDD" id="cd00653">
    <property type="entry name" value="RNA_pol_B_RPB2"/>
    <property type="match status" value="1"/>
</dbReference>
<dbReference type="FunFam" id="2.40.270.10:FF:000026">
    <property type="match status" value="1"/>
</dbReference>
<dbReference type="FunFam" id="2.40.50.150:FF:000002">
    <property type="entry name" value="DNA-directed RNA polymerase subunit beta"/>
    <property type="match status" value="1"/>
</dbReference>
<dbReference type="FunFam" id="3.90.1070.20:FF:000001">
    <property type="entry name" value="DNA-directed RNA polymerase subunit beta"/>
    <property type="match status" value="1"/>
</dbReference>
<dbReference type="FunFam" id="3.90.1100.10:FF:000003">
    <property type="entry name" value="DNA-directed RNA polymerase subunit beta"/>
    <property type="match status" value="1"/>
</dbReference>
<dbReference type="FunFam" id="3.90.1100.10:FF:000043">
    <property type="entry name" value="DNA-directed RNA polymerase subunit beta"/>
    <property type="match status" value="1"/>
</dbReference>
<dbReference type="FunFam" id="3.90.1110.10:FF:000002">
    <property type="entry name" value="DNA-directed RNA polymerase subunit beta"/>
    <property type="match status" value="1"/>
</dbReference>
<dbReference type="FunFam" id="3.90.1800.10:FF:000002">
    <property type="entry name" value="DNA-directed RNA polymerase subunit beta"/>
    <property type="match status" value="1"/>
</dbReference>
<dbReference type="Gene3D" id="2.40.50.150">
    <property type="match status" value="1"/>
</dbReference>
<dbReference type="Gene3D" id="3.90.1070.20">
    <property type="match status" value="1"/>
</dbReference>
<dbReference type="Gene3D" id="3.90.1100.10">
    <property type="match status" value="1"/>
</dbReference>
<dbReference type="Gene3D" id="2.40.270.10">
    <property type="entry name" value="DNA-directed RNA polymerase, subunit 2, domain 6"/>
    <property type="match status" value="1"/>
</dbReference>
<dbReference type="Gene3D" id="3.90.1800.10">
    <property type="entry name" value="RNA polymerase alpha subunit dimerisation domain"/>
    <property type="match status" value="1"/>
</dbReference>
<dbReference type="Gene3D" id="3.90.1110.10">
    <property type="entry name" value="RNA polymerase Rpb2, domain 2"/>
    <property type="match status" value="1"/>
</dbReference>
<dbReference type="InterPro" id="IPR015712">
    <property type="entry name" value="DNA-dir_RNA_pol_su2"/>
</dbReference>
<dbReference type="InterPro" id="IPR007120">
    <property type="entry name" value="DNA-dir_RNAP_su2_dom"/>
</dbReference>
<dbReference type="InterPro" id="IPR037033">
    <property type="entry name" value="DNA-dir_RNAP_su2_hyb_sf"/>
</dbReference>
<dbReference type="InterPro" id="IPR007121">
    <property type="entry name" value="RNA_pol_bsu_CS"/>
</dbReference>
<dbReference type="InterPro" id="IPR007644">
    <property type="entry name" value="RNA_pol_bsu_protrusion"/>
</dbReference>
<dbReference type="InterPro" id="IPR007642">
    <property type="entry name" value="RNA_pol_Rpb2_2"/>
</dbReference>
<dbReference type="InterPro" id="IPR037034">
    <property type="entry name" value="RNA_pol_Rpb2_2_sf"/>
</dbReference>
<dbReference type="InterPro" id="IPR007645">
    <property type="entry name" value="RNA_pol_Rpb2_3"/>
</dbReference>
<dbReference type="InterPro" id="IPR007646">
    <property type="entry name" value="RNA_pol_Rpb2_4"/>
</dbReference>
<dbReference type="InterPro" id="IPR007647">
    <property type="entry name" value="RNA_pol_Rpb2_5"/>
</dbReference>
<dbReference type="InterPro" id="IPR007641">
    <property type="entry name" value="RNA_pol_Rpb2_7"/>
</dbReference>
<dbReference type="InterPro" id="IPR014724">
    <property type="entry name" value="RNA_pol_RPB2_OB-fold"/>
</dbReference>
<dbReference type="NCBIfam" id="NF007175">
    <property type="entry name" value="PRK09606.1"/>
    <property type="match status" value="1"/>
</dbReference>
<dbReference type="PANTHER" id="PTHR20856">
    <property type="entry name" value="DNA-DIRECTED RNA POLYMERASE I SUBUNIT 2"/>
    <property type="match status" value="1"/>
</dbReference>
<dbReference type="Pfam" id="PF04563">
    <property type="entry name" value="RNA_pol_Rpb2_1"/>
    <property type="match status" value="1"/>
</dbReference>
<dbReference type="Pfam" id="PF04561">
    <property type="entry name" value="RNA_pol_Rpb2_2"/>
    <property type="match status" value="1"/>
</dbReference>
<dbReference type="Pfam" id="PF04565">
    <property type="entry name" value="RNA_pol_Rpb2_3"/>
    <property type="match status" value="1"/>
</dbReference>
<dbReference type="Pfam" id="PF04566">
    <property type="entry name" value="RNA_pol_Rpb2_4"/>
    <property type="match status" value="1"/>
</dbReference>
<dbReference type="Pfam" id="PF04567">
    <property type="entry name" value="RNA_pol_Rpb2_5"/>
    <property type="match status" value="1"/>
</dbReference>
<dbReference type="Pfam" id="PF00562">
    <property type="entry name" value="RNA_pol_Rpb2_6"/>
    <property type="match status" value="1"/>
</dbReference>
<dbReference type="Pfam" id="PF04560">
    <property type="entry name" value="RNA_pol_Rpb2_7"/>
    <property type="match status" value="1"/>
</dbReference>
<dbReference type="SUPFAM" id="SSF64484">
    <property type="entry name" value="beta and beta-prime subunits of DNA dependent RNA-polymerase"/>
    <property type="match status" value="1"/>
</dbReference>
<dbReference type="PROSITE" id="PS01166">
    <property type="entry name" value="RNA_POL_BETA"/>
    <property type="match status" value="1"/>
</dbReference>
<accession>Q8CFI7</accession>
<gene>
    <name evidence="4" type="primary">Polr2b</name>
</gene>
<evidence type="ECO:0000250" key="1">
    <source>
        <dbReference type="UniProtKB" id="A5PJW8"/>
    </source>
</evidence>
<evidence type="ECO:0000250" key="2">
    <source>
        <dbReference type="UniProtKB" id="P30876"/>
    </source>
</evidence>
<evidence type="ECO:0000305" key="3"/>
<evidence type="ECO:0000312" key="4">
    <source>
        <dbReference type="MGI" id="MGI:2388280"/>
    </source>
</evidence>
<proteinExistence type="evidence at protein level"/>
<keyword id="KW-0240">DNA-directed RNA polymerase</keyword>
<keyword id="KW-0378">Hydrolase</keyword>
<keyword id="KW-0460">Magnesium</keyword>
<keyword id="KW-0479">Metal-binding</keyword>
<keyword id="KW-0488">Methylation</keyword>
<keyword id="KW-0548">Nucleotidyltransferase</keyword>
<keyword id="KW-0539">Nucleus</keyword>
<keyword id="KW-0597">Phosphoprotein</keyword>
<keyword id="KW-1185">Reference proteome</keyword>
<keyword id="KW-0804">Transcription</keyword>
<keyword id="KW-0808">Transferase</keyword>
<keyword id="KW-0862">Zinc</keyword>
<keyword id="KW-0863">Zinc-finger</keyword>
<organism>
    <name type="scientific">Mus musculus</name>
    <name type="common">Mouse</name>
    <dbReference type="NCBI Taxonomy" id="10090"/>
    <lineage>
        <taxon>Eukaryota</taxon>
        <taxon>Metazoa</taxon>
        <taxon>Chordata</taxon>
        <taxon>Craniata</taxon>
        <taxon>Vertebrata</taxon>
        <taxon>Euteleostomi</taxon>
        <taxon>Mammalia</taxon>
        <taxon>Eutheria</taxon>
        <taxon>Euarchontoglires</taxon>
        <taxon>Glires</taxon>
        <taxon>Rodentia</taxon>
        <taxon>Myomorpha</taxon>
        <taxon>Muroidea</taxon>
        <taxon>Muridae</taxon>
        <taxon>Murinae</taxon>
        <taxon>Mus</taxon>
        <taxon>Mus</taxon>
    </lineage>
</organism>
<comment type="function">
    <text evidence="1 2">Catalytic core component of RNA polymerase II (Pol II), a DNA-dependent RNA polymerase which synthesizes mRNA precursors and many functional non-coding RNAs using the four ribonucleoside triphosphates as substrates (By similarity). Pol II-mediated transcription cycle proceeds through transcription initiation, transcription elongation and transcription termination stages. During transcription initiation, Pol II pre-initiation complex (PIC) is recruited to DNA promoters, with focused-type promoters containing either the initiator (Inr) element, or the TATA-box found in cell-type specific genes and dispersed-type promoters that often contain hypomethylated CpG islands usually found in housekeeping genes. Once the polymerase has escaped from the promoter it enters the elongation phase during which RNA is actively polymerized, based on complementarity with the template DNA strand. Transcription termination involves the release of the RNA transcript and polymerase from the DNA (By similarity). Forms Pol II active center together with the largest subunit POLR2A/RPB1. Appends one nucleotide at a time to the 3' end of the nascent RNA, with POLR2A/RPB1 most likely contributing a Mg(2+)-coordinating DxDGD motif and POLR2B/RPB2 participating in the coordination of a second Mg(2+) ion and providing lysine residues believed to facilitate Watson-Crick base pairing between the incoming nucleotide and template base. Typically, Mg(2+) ions direct a 5' nucleoside triphosphate to form a phosphodiester bond with the 3' hydroxyl of the preceding nucleotide of the nascent RNA, with the elimination of pyrophosphate. The reversible pyrophosphorolysis can occur at high pyrophosphate concentrations (By similarity). Can proofread the nascent RNA transcript by means of a 3' -&gt; 5' exonuclease activity. If a ribonucleotide is mis-incorporated, backtracks along the template DNA and cleaves the phosphodiester bond releasing the mis-incorporated 5'-ribonucleotide (By similarity).</text>
</comment>
<comment type="function">
    <text evidence="2">RNA-dependent RNA polymerase that catalyzes the extension of a non-coding RNA (ncRNA) at the 3'-end using the four ribonucleoside triphosphates as substrates. An internal ncRNA sequence near the 3'-end serves as a template in a single-round Pol II-mediated RNA polymerization reaction. May decrease the stability of ncRNAs that repress Pol II-mediated gene transcription.</text>
</comment>
<comment type="catalytic activity">
    <reaction evidence="2">
        <text>RNA(n) + a ribonucleoside 5'-triphosphate = RNA(n+1) + diphosphate</text>
        <dbReference type="Rhea" id="RHEA:21248"/>
        <dbReference type="Rhea" id="RHEA-COMP:14527"/>
        <dbReference type="Rhea" id="RHEA-COMP:17342"/>
        <dbReference type="ChEBI" id="CHEBI:33019"/>
        <dbReference type="ChEBI" id="CHEBI:61557"/>
        <dbReference type="ChEBI" id="CHEBI:140395"/>
        <dbReference type="EC" id="2.7.7.6"/>
    </reaction>
    <physiologicalReaction direction="left-to-right" evidence="2">
        <dbReference type="Rhea" id="RHEA:21249"/>
    </physiologicalReaction>
    <physiologicalReaction direction="right-to-left" evidence="2">
        <dbReference type="Rhea" id="RHEA:21250"/>
    </physiologicalReaction>
</comment>
<comment type="catalytic activity">
    <reaction evidence="2">
        <text>RNA(n) + a ribonucleoside 5'-triphosphate = RNA(n+1) + diphosphate</text>
        <dbReference type="Rhea" id="RHEA:21248"/>
        <dbReference type="Rhea" id="RHEA-COMP:14527"/>
        <dbReference type="Rhea" id="RHEA-COMP:17342"/>
        <dbReference type="ChEBI" id="CHEBI:33019"/>
        <dbReference type="ChEBI" id="CHEBI:61557"/>
        <dbReference type="ChEBI" id="CHEBI:140395"/>
        <dbReference type="EC" id="2.7.7.48"/>
    </reaction>
    <physiologicalReaction direction="left-to-right" evidence="2">
        <dbReference type="Rhea" id="RHEA:21249"/>
    </physiologicalReaction>
</comment>
<comment type="catalytic activity">
    <reaction evidence="2">
        <text>a 3'-end ribonucleotidyl-ribonucleotide-RNA + H2O = a 3'-end ribonucleotide-RNA + a ribonucleoside 5'-phosphate + H(+)</text>
        <dbReference type="Rhea" id="RHEA:77763"/>
        <dbReference type="Rhea" id="RHEA-COMP:17428"/>
        <dbReference type="Rhea" id="RHEA-COMP:18982"/>
        <dbReference type="ChEBI" id="CHEBI:15377"/>
        <dbReference type="ChEBI" id="CHEBI:15378"/>
        <dbReference type="ChEBI" id="CHEBI:58043"/>
        <dbReference type="ChEBI" id="CHEBI:74896"/>
        <dbReference type="ChEBI" id="CHEBI:197502"/>
    </reaction>
    <physiologicalReaction direction="left-to-right" evidence="2">
        <dbReference type="Rhea" id="RHEA:77764"/>
    </physiologicalReaction>
</comment>
<comment type="cofactor">
    <cofactor evidence="2">
        <name>Mg(2+)</name>
        <dbReference type="ChEBI" id="CHEBI:18420"/>
    </cofactor>
    <text evidence="2">Two Mg(2+) ions are coordinated by both the catalytic residues and the nucleic acid substrate to enhance substrate recognition and catalytic efficiency.</text>
</comment>
<comment type="activity regulation">
    <text evidence="2">Pol II enzymatic activities are inhibited by alpha-amanitin. 3'-&gt;5' exonuclease activity is stimulated by TFIIS, whereas pyrophosphorolysis is enhanced by TFIIF.</text>
</comment>
<comment type="subunit">
    <text evidence="2">Component of the RNA polymerase II (Pol II) core complex consisting of 12 subunits: a ten-subunit catalytic core composed of POLR2A/RPB1, POLR2B/RPB2, POLR2C/RPB3, POLR2I/RPB9, POLR2J/RPB11, POLR2E/RPABC1, POLR2F/RPABC2, POLR2H/RPABC3, POLR2K/RPABC4 and POLR2L/RPABC5 and a mobile stalk composed of two subunits POLR2D/RPB4 and POLR2G/RPB7, protruding from the core and functioning primarily in transcription initiation. Part of Pol II(G) complex, in which Pol II core associates with an additional subunit POLR2M; unlike conventional Pol II, Pol II(G) functions as a transcriptional repressor. Part of TBP-based Pol II pre-initiation complex (PIC), in which Pol II core assembles with general transcription factors and other specific initiation factors including GTF2E1, GTF2E2, GTF2F1, GTF2F2, TCEA1, ERCC2, ERCC3, GTF2H2, GTF2H3, GTF2H4, GTF2H5, GTF2A1, GTF2A2, GTF2B and TBP; this large multi-subunit PIC complex mediates DNA unwinding and targets Pol II core to the transcription start site where the first phosphodiester bond forms. Interacts with WDR82. Interacts with MEN1.</text>
</comment>
<comment type="subcellular location">
    <subcellularLocation>
        <location evidence="2">Nucleus</location>
    </subcellularLocation>
</comment>
<comment type="similarity">
    <text evidence="3">Belongs to the RNA polymerase beta chain family.</text>
</comment>
<comment type="sequence caution" evidence="3">
    <conflict type="erroneous initiation">
        <sequence resource="EMBL-CDS" id="AAH38472"/>
    </conflict>
</comment>